<evidence type="ECO:0000255" key="1">
    <source>
        <dbReference type="HAMAP-Rule" id="MF_00337"/>
    </source>
</evidence>
<comment type="function">
    <text evidence="1">Bidirectionally degrades single-stranded DNA into large acid-insoluble oligonucleotides, which are then degraded further into small acid-soluble oligonucleotides.</text>
</comment>
<comment type="catalytic activity">
    <reaction evidence="1">
        <text>Exonucleolytic cleavage in either 5'- to 3'- or 3'- to 5'-direction to yield nucleoside 5'-phosphates.</text>
        <dbReference type="EC" id="3.1.11.6"/>
    </reaction>
</comment>
<comment type="subunit">
    <text evidence="1">Heterooligomer composed of large and small subunits.</text>
</comment>
<comment type="subcellular location">
    <subcellularLocation>
        <location evidence="1">Cytoplasm</location>
    </subcellularLocation>
</comment>
<comment type="similarity">
    <text evidence="1">Belongs to the XseB family.</text>
</comment>
<keyword id="KW-0963">Cytoplasm</keyword>
<keyword id="KW-0269">Exonuclease</keyword>
<keyword id="KW-0378">Hydrolase</keyword>
<keyword id="KW-0540">Nuclease</keyword>
<reference key="1">
    <citation type="journal article" date="2004" name="Proc. Natl. Acad. Sci. U.S.A.">
        <title>Complete genomes of two clinical Staphylococcus aureus strains: evidence for the rapid evolution of virulence and drug resistance.</title>
        <authorList>
            <person name="Holden M.T.G."/>
            <person name="Feil E.J."/>
            <person name="Lindsay J.A."/>
            <person name="Peacock S.J."/>
            <person name="Day N.P.J."/>
            <person name="Enright M.C."/>
            <person name="Foster T.J."/>
            <person name="Moore C.E."/>
            <person name="Hurst L."/>
            <person name="Atkin R."/>
            <person name="Barron A."/>
            <person name="Bason N."/>
            <person name="Bentley S.D."/>
            <person name="Chillingworth C."/>
            <person name="Chillingworth T."/>
            <person name="Churcher C."/>
            <person name="Clark L."/>
            <person name="Corton C."/>
            <person name="Cronin A."/>
            <person name="Doggett J."/>
            <person name="Dowd L."/>
            <person name="Feltwell T."/>
            <person name="Hance Z."/>
            <person name="Harris B."/>
            <person name="Hauser H."/>
            <person name="Holroyd S."/>
            <person name="Jagels K."/>
            <person name="James K.D."/>
            <person name="Lennard N."/>
            <person name="Line A."/>
            <person name="Mayes R."/>
            <person name="Moule S."/>
            <person name="Mungall K."/>
            <person name="Ormond D."/>
            <person name="Quail M.A."/>
            <person name="Rabbinowitsch E."/>
            <person name="Rutherford K.M."/>
            <person name="Sanders M."/>
            <person name="Sharp S."/>
            <person name="Simmonds M."/>
            <person name="Stevens K."/>
            <person name="Whitehead S."/>
            <person name="Barrell B.G."/>
            <person name="Spratt B.G."/>
            <person name="Parkhill J."/>
        </authorList>
    </citation>
    <scope>NUCLEOTIDE SEQUENCE [LARGE SCALE GENOMIC DNA]</scope>
    <source>
        <strain>MSSA476</strain>
    </source>
</reference>
<name>EX7S_STAAS</name>
<organism>
    <name type="scientific">Staphylococcus aureus (strain MSSA476)</name>
    <dbReference type="NCBI Taxonomy" id="282459"/>
    <lineage>
        <taxon>Bacteria</taxon>
        <taxon>Bacillati</taxon>
        <taxon>Bacillota</taxon>
        <taxon>Bacilli</taxon>
        <taxon>Bacillales</taxon>
        <taxon>Staphylococcaceae</taxon>
        <taxon>Staphylococcus</taxon>
    </lineage>
</organism>
<protein>
    <recommendedName>
        <fullName evidence="1">Exodeoxyribonuclease 7 small subunit</fullName>
        <ecNumber evidence="1">3.1.11.6</ecNumber>
    </recommendedName>
    <alternativeName>
        <fullName evidence="1">Exodeoxyribonuclease VII small subunit</fullName>
        <shortName evidence="1">Exonuclease VII small subunit</shortName>
    </alternativeName>
</protein>
<dbReference type="EC" id="3.1.11.6" evidence="1"/>
<dbReference type="EMBL" id="BX571857">
    <property type="protein sequence ID" value="CAG43250.1"/>
    <property type="molecule type" value="Genomic_DNA"/>
</dbReference>
<dbReference type="RefSeq" id="WP_000159865.1">
    <property type="nucleotide sequence ID" value="NC_002953.3"/>
</dbReference>
<dbReference type="SMR" id="Q6G943"/>
<dbReference type="KEGG" id="sas:SAS1461"/>
<dbReference type="HOGENOM" id="CLU_145918_3_2_9"/>
<dbReference type="GO" id="GO:0005829">
    <property type="term" value="C:cytosol"/>
    <property type="evidence" value="ECO:0007669"/>
    <property type="project" value="TreeGrafter"/>
</dbReference>
<dbReference type="GO" id="GO:0009318">
    <property type="term" value="C:exodeoxyribonuclease VII complex"/>
    <property type="evidence" value="ECO:0007669"/>
    <property type="project" value="InterPro"/>
</dbReference>
<dbReference type="GO" id="GO:0008855">
    <property type="term" value="F:exodeoxyribonuclease VII activity"/>
    <property type="evidence" value="ECO:0007669"/>
    <property type="project" value="UniProtKB-UniRule"/>
</dbReference>
<dbReference type="GO" id="GO:0006308">
    <property type="term" value="P:DNA catabolic process"/>
    <property type="evidence" value="ECO:0007669"/>
    <property type="project" value="UniProtKB-UniRule"/>
</dbReference>
<dbReference type="FunFam" id="1.10.287.1040:FF:000006">
    <property type="entry name" value="Exodeoxyribonuclease 7 small subunit"/>
    <property type="match status" value="1"/>
</dbReference>
<dbReference type="Gene3D" id="1.10.287.1040">
    <property type="entry name" value="Exonuclease VII, small subunit"/>
    <property type="match status" value="1"/>
</dbReference>
<dbReference type="HAMAP" id="MF_00337">
    <property type="entry name" value="Exonuc_7_S"/>
    <property type="match status" value="1"/>
</dbReference>
<dbReference type="InterPro" id="IPR003761">
    <property type="entry name" value="Exonuc_VII_S"/>
</dbReference>
<dbReference type="InterPro" id="IPR037004">
    <property type="entry name" value="Exonuc_VII_ssu_sf"/>
</dbReference>
<dbReference type="NCBIfam" id="NF002140">
    <property type="entry name" value="PRK00977.1-4"/>
    <property type="match status" value="1"/>
</dbReference>
<dbReference type="NCBIfam" id="NF010671">
    <property type="entry name" value="PRK14068.1"/>
    <property type="match status" value="1"/>
</dbReference>
<dbReference type="NCBIfam" id="TIGR01280">
    <property type="entry name" value="xseB"/>
    <property type="match status" value="1"/>
</dbReference>
<dbReference type="PANTHER" id="PTHR34137">
    <property type="entry name" value="EXODEOXYRIBONUCLEASE 7 SMALL SUBUNIT"/>
    <property type="match status" value="1"/>
</dbReference>
<dbReference type="PANTHER" id="PTHR34137:SF1">
    <property type="entry name" value="EXODEOXYRIBONUCLEASE 7 SMALL SUBUNIT"/>
    <property type="match status" value="1"/>
</dbReference>
<dbReference type="Pfam" id="PF02609">
    <property type="entry name" value="Exonuc_VII_S"/>
    <property type="match status" value="1"/>
</dbReference>
<dbReference type="PIRSF" id="PIRSF006488">
    <property type="entry name" value="Exonuc_VII_S"/>
    <property type="match status" value="1"/>
</dbReference>
<dbReference type="SUPFAM" id="SSF116842">
    <property type="entry name" value="XseB-like"/>
    <property type="match status" value="1"/>
</dbReference>
<feature type="chain" id="PRO_0000207007" description="Exodeoxyribonuclease 7 small subunit">
    <location>
        <begin position="1"/>
        <end position="76"/>
    </location>
</feature>
<proteinExistence type="inferred from homology"/>
<gene>
    <name evidence="1" type="primary">xseB</name>
    <name type="ordered locus">SAS1461</name>
</gene>
<sequence length="76" mass="8760">MTKETQSFEEMMQELEQIVQKLDNETVSLEESLDLYQRGMKLSAACDTTLKNAEKKVNDLIKEEAEDVKNDESTDE</sequence>
<accession>Q6G943</accession>